<reference key="1">
    <citation type="journal article" date="2004" name="Nat. Biotechnol.">
        <title>Complete sequence and comparative genome analysis of the dairy bacterium Streptococcus thermophilus.</title>
        <authorList>
            <person name="Bolotin A."/>
            <person name="Quinquis B."/>
            <person name="Renault P."/>
            <person name="Sorokin A."/>
            <person name="Ehrlich S.D."/>
            <person name="Kulakauskas S."/>
            <person name="Lapidus A."/>
            <person name="Goltsman E."/>
            <person name="Mazur M."/>
            <person name="Pusch G.D."/>
            <person name="Fonstein M."/>
            <person name="Overbeek R."/>
            <person name="Kyprides N."/>
            <person name="Purnelle B."/>
            <person name="Prozzi D."/>
            <person name="Ngui K."/>
            <person name="Masuy D."/>
            <person name="Hancy F."/>
            <person name="Burteau S."/>
            <person name="Boutry M."/>
            <person name="Delcour J."/>
            <person name="Goffeau A."/>
            <person name="Hols P."/>
        </authorList>
    </citation>
    <scope>NUCLEOTIDE SEQUENCE [LARGE SCALE GENOMIC DNA]</scope>
    <source>
        <strain>ATCC BAA-250 / LMG 18311</strain>
    </source>
</reference>
<evidence type="ECO:0000255" key="1">
    <source>
        <dbReference type="HAMAP-Rule" id="MF_00170"/>
    </source>
</evidence>
<dbReference type="EC" id="5.3.1.6" evidence="1"/>
<dbReference type="EMBL" id="CP000023">
    <property type="protein sequence ID" value="AAV60760.1"/>
    <property type="molecule type" value="Genomic_DNA"/>
</dbReference>
<dbReference type="RefSeq" id="WP_002950867.1">
    <property type="nucleotide sequence ID" value="NC_006448.1"/>
</dbReference>
<dbReference type="SMR" id="Q5M481"/>
<dbReference type="STRING" id="264199.stu1121"/>
<dbReference type="GeneID" id="66898919"/>
<dbReference type="KEGG" id="stl:stu1121"/>
<dbReference type="eggNOG" id="COG0120">
    <property type="taxonomic scope" value="Bacteria"/>
</dbReference>
<dbReference type="HOGENOM" id="CLU_056590_1_0_9"/>
<dbReference type="UniPathway" id="UPA00115">
    <property type="reaction ID" value="UER00412"/>
</dbReference>
<dbReference type="Proteomes" id="UP000001170">
    <property type="component" value="Chromosome"/>
</dbReference>
<dbReference type="GO" id="GO:0004751">
    <property type="term" value="F:ribose-5-phosphate isomerase activity"/>
    <property type="evidence" value="ECO:0007669"/>
    <property type="project" value="UniProtKB-UniRule"/>
</dbReference>
<dbReference type="GO" id="GO:0009052">
    <property type="term" value="P:pentose-phosphate shunt, non-oxidative branch"/>
    <property type="evidence" value="ECO:0007669"/>
    <property type="project" value="UniProtKB-UniRule"/>
</dbReference>
<dbReference type="CDD" id="cd01398">
    <property type="entry name" value="RPI_A"/>
    <property type="match status" value="1"/>
</dbReference>
<dbReference type="FunFam" id="3.40.50.1360:FF:000001">
    <property type="entry name" value="Ribose-5-phosphate isomerase A"/>
    <property type="match status" value="1"/>
</dbReference>
<dbReference type="Gene3D" id="3.30.70.260">
    <property type="match status" value="1"/>
</dbReference>
<dbReference type="Gene3D" id="3.40.50.1360">
    <property type="match status" value="1"/>
</dbReference>
<dbReference type="HAMAP" id="MF_00170">
    <property type="entry name" value="Rib_5P_isom_A"/>
    <property type="match status" value="1"/>
</dbReference>
<dbReference type="InterPro" id="IPR037171">
    <property type="entry name" value="NagB/RpiA_transferase-like"/>
</dbReference>
<dbReference type="InterPro" id="IPR050262">
    <property type="entry name" value="Ribose-5P_isomerase"/>
</dbReference>
<dbReference type="InterPro" id="IPR020672">
    <property type="entry name" value="Ribose5P_isomerase_typA_subgr"/>
</dbReference>
<dbReference type="InterPro" id="IPR004788">
    <property type="entry name" value="Ribose5P_isomerase_type_A"/>
</dbReference>
<dbReference type="NCBIfam" id="NF001924">
    <property type="entry name" value="PRK00702.1"/>
    <property type="match status" value="1"/>
</dbReference>
<dbReference type="NCBIfam" id="TIGR00021">
    <property type="entry name" value="rpiA"/>
    <property type="match status" value="1"/>
</dbReference>
<dbReference type="PANTHER" id="PTHR43748">
    <property type="entry name" value="RIBOSE-5-PHOSPHATE ISOMERASE 3, CHLOROPLASTIC-RELATED"/>
    <property type="match status" value="1"/>
</dbReference>
<dbReference type="PANTHER" id="PTHR43748:SF3">
    <property type="entry name" value="RIBOSE-5-PHOSPHATE ISOMERASE 3, CHLOROPLASTIC-RELATED"/>
    <property type="match status" value="1"/>
</dbReference>
<dbReference type="Pfam" id="PF06026">
    <property type="entry name" value="Rib_5-P_isom_A"/>
    <property type="match status" value="1"/>
</dbReference>
<dbReference type="SUPFAM" id="SSF75445">
    <property type="entry name" value="D-ribose-5-phosphate isomerase (RpiA), lid domain"/>
    <property type="match status" value="1"/>
</dbReference>
<dbReference type="SUPFAM" id="SSF100950">
    <property type="entry name" value="NagB/RpiA/CoA transferase-like"/>
    <property type="match status" value="1"/>
</dbReference>
<sequence>MDELKKLAGVYAAGFVEDGMVVGLGTGSTAYFFVEEIGRRIKEEGLSVVGVTTSTQTTKQAEGLGIPLKSVDDIDSIDVTVDGADEVDPQLNGIKGGGGALLMEKIVATPTKKYIWVVDESKMVDQLGAFKLPVEVVQYGADRLYLDFESKGYKPSFRVTEQGDRFVTDMKNFIIDLDLGKINNPVALGDELKAMTGVVEHGLFNGMVNKVIVAGKDGVKIVEVKD</sequence>
<organism>
    <name type="scientific">Streptococcus thermophilus (strain ATCC BAA-250 / LMG 18311)</name>
    <dbReference type="NCBI Taxonomy" id="264199"/>
    <lineage>
        <taxon>Bacteria</taxon>
        <taxon>Bacillati</taxon>
        <taxon>Bacillota</taxon>
        <taxon>Bacilli</taxon>
        <taxon>Lactobacillales</taxon>
        <taxon>Streptococcaceae</taxon>
        <taxon>Streptococcus</taxon>
    </lineage>
</organism>
<name>RPIA_STRT2</name>
<accession>Q5M481</accession>
<protein>
    <recommendedName>
        <fullName evidence="1">Ribose-5-phosphate isomerase A</fullName>
        <ecNumber evidence="1">5.3.1.6</ecNumber>
    </recommendedName>
    <alternativeName>
        <fullName evidence="1">Phosphoriboisomerase A</fullName>
        <shortName evidence="1">PRI</shortName>
    </alternativeName>
</protein>
<keyword id="KW-0413">Isomerase</keyword>
<keyword id="KW-1185">Reference proteome</keyword>
<proteinExistence type="inferred from homology"/>
<feature type="chain" id="PRO_0000158481" description="Ribose-5-phosphate isomerase A">
    <location>
        <begin position="1"/>
        <end position="226"/>
    </location>
</feature>
<feature type="active site" description="Proton acceptor" evidence="1">
    <location>
        <position position="104"/>
    </location>
</feature>
<feature type="binding site" evidence="1">
    <location>
        <begin position="26"/>
        <end position="29"/>
    </location>
    <ligand>
        <name>substrate</name>
    </ligand>
</feature>
<feature type="binding site" evidence="1">
    <location>
        <begin position="82"/>
        <end position="85"/>
    </location>
    <ligand>
        <name>substrate</name>
    </ligand>
</feature>
<feature type="binding site" evidence="1">
    <location>
        <begin position="95"/>
        <end position="98"/>
    </location>
    <ligand>
        <name>substrate</name>
    </ligand>
</feature>
<feature type="binding site" evidence="1">
    <location>
        <position position="122"/>
    </location>
    <ligand>
        <name>substrate</name>
    </ligand>
</feature>
<gene>
    <name evidence="1" type="primary">rpiA</name>
    <name type="ordered locus">stu1121</name>
</gene>
<comment type="function">
    <text evidence="1">Catalyzes the reversible conversion of ribose-5-phosphate to ribulose 5-phosphate.</text>
</comment>
<comment type="catalytic activity">
    <reaction evidence="1">
        <text>aldehydo-D-ribose 5-phosphate = D-ribulose 5-phosphate</text>
        <dbReference type="Rhea" id="RHEA:14657"/>
        <dbReference type="ChEBI" id="CHEBI:58121"/>
        <dbReference type="ChEBI" id="CHEBI:58273"/>
        <dbReference type="EC" id="5.3.1.6"/>
    </reaction>
</comment>
<comment type="pathway">
    <text evidence="1">Carbohydrate degradation; pentose phosphate pathway; D-ribose 5-phosphate from D-ribulose 5-phosphate (non-oxidative stage): step 1/1.</text>
</comment>
<comment type="subunit">
    <text evidence="1">Homodimer.</text>
</comment>
<comment type="similarity">
    <text evidence="1">Belongs to the ribose 5-phosphate isomerase family.</text>
</comment>